<gene>
    <name evidence="1" type="primary">thi4</name>
    <name type="ordered locus">Mevan_0663</name>
</gene>
<accession>A6UPZ7</accession>
<organism>
    <name type="scientific">Methanococcus vannielii (strain ATCC 35089 / DSM 1224 / JCM 13029 / OCM 148 / SB)</name>
    <dbReference type="NCBI Taxonomy" id="406327"/>
    <lineage>
        <taxon>Archaea</taxon>
        <taxon>Methanobacteriati</taxon>
        <taxon>Methanobacteriota</taxon>
        <taxon>Methanomada group</taxon>
        <taxon>Methanococci</taxon>
        <taxon>Methanococcales</taxon>
        <taxon>Methanococcaceae</taxon>
        <taxon>Methanococcus</taxon>
    </lineage>
</organism>
<sequence length="261" mass="27757">MDGKLRADEVAVTKSIIKSSFEMWMDLIEVDVVIVGGGPSGLTAAKYLAEKGVKTLVLERHLSFGGGTWGGGMGFPNIVVEKPADEILRSAGIKLKSVDGEPELFTADSVEVPAKLGVAAIDAGAKILTGIVVEDLILKEDKISGVVIQSYSIEKAGLHVDPITISAKYVIDSTGHDASVVSTLARKNKDLGIEVPGEKSMWAEKGENSLTRNTREIFPGLFVCGMTANAYHAGYRMGAIFGGMYLSGKKCAELILEKLNK</sequence>
<feature type="chain" id="PRO_1000022784" description="Thiamine thiazole synthase">
    <location>
        <begin position="1"/>
        <end position="261"/>
    </location>
</feature>
<feature type="binding site" description="in other chain" evidence="1">
    <location>
        <position position="40"/>
    </location>
    <ligand>
        <name>NAD(+)</name>
        <dbReference type="ChEBI" id="CHEBI:57540"/>
        <note>ligand shared between two adjacent protomers</note>
    </ligand>
</feature>
<feature type="binding site" description="in other chain" evidence="1">
    <location>
        <begin position="59"/>
        <end position="60"/>
    </location>
    <ligand>
        <name>NAD(+)</name>
        <dbReference type="ChEBI" id="CHEBI:57540"/>
        <note>ligand shared between two adjacent protomers</note>
    </ligand>
</feature>
<feature type="binding site" description="in other chain" evidence="1">
    <location>
        <position position="67"/>
    </location>
    <ligand>
        <name>NAD(+)</name>
        <dbReference type="ChEBI" id="CHEBI:57540"/>
        <note>ligand shared between two adjacent protomers</note>
    </ligand>
</feature>
<feature type="binding site" description="in other chain" evidence="1">
    <location>
        <position position="133"/>
    </location>
    <ligand>
        <name>NAD(+)</name>
        <dbReference type="ChEBI" id="CHEBI:57540"/>
        <note>ligand shared between two adjacent protomers</note>
    </ligand>
</feature>
<feature type="binding site" evidence="1">
    <location>
        <begin position="159"/>
        <end position="161"/>
    </location>
    <ligand>
        <name>NAD(+)</name>
        <dbReference type="ChEBI" id="CHEBI:57540"/>
        <note>ligand shared between two adjacent protomers</note>
    </ligand>
</feature>
<feature type="binding site" evidence="1">
    <location>
        <position position="161"/>
    </location>
    <ligand>
        <name>Fe cation</name>
        <dbReference type="ChEBI" id="CHEBI:24875"/>
        <note>ligand shared between two adjacent protomers</note>
    </ligand>
</feature>
<feature type="binding site" description="in other chain" evidence="1">
    <location>
        <position position="176"/>
    </location>
    <ligand>
        <name>Fe cation</name>
        <dbReference type="ChEBI" id="CHEBI:24875"/>
        <note>ligand shared between two adjacent protomers</note>
    </ligand>
</feature>
<feature type="binding site" description="in other chain" evidence="1">
    <location>
        <position position="179"/>
    </location>
    <ligand>
        <name>NAD(+)</name>
        <dbReference type="ChEBI" id="CHEBI:57540"/>
        <note>ligand shared between two adjacent protomers</note>
    </ligand>
</feature>
<feature type="binding site" description="in other chain" evidence="1">
    <location>
        <position position="226"/>
    </location>
    <ligand>
        <name>NAD(+)</name>
        <dbReference type="ChEBI" id="CHEBI:57540"/>
        <note>ligand shared between two adjacent protomers</note>
    </ligand>
</feature>
<feature type="binding site" evidence="1">
    <location>
        <position position="236"/>
    </location>
    <ligand>
        <name>glycine</name>
        <dbReference type="ChEBI" id="CHEBI:57305"/>
    </ligand>
</feature>
<proteinExistence type="inferred from homology"/>
<comment type="function">
    <text evidence="1">Involved in the biosynthesis of the thiazole moiety of thiamine. Catalyzes the conversion of NAD and glycine to adenosine diphosphate 5-(2-hydroxyethyl)-4-methylthiazole-2-carboxylate (ADT), an adenylated thiazole intermediate, using free sulfide as a source of sulfur.</text>
</comment>
<comment type="catalytic activity">
    <reaction evidence="1">
        <text>hydrogen sulfide + glycine + NAD(+) = ADP-5-ethyl-4-methylthiazole-2-carboxylate + nicotinamide + 3 H2O + H(+)</text>
        <dbReference type="Rhea" id="RHEA:55704"/>
        <dbReference type="ChEBI" id="CHEBI:15377"/>
        <dbReference type="ChEBI" id="CHEBI:15378"/>
        <dbReference type="ChEBI" id="CHEBI:17154"/>
        <dbReference type="ChEBI" id="CHEBI:29919"/>
        <dbReference type="ChEBI" id="CHEBI:57305"/>
        <dbReference type="ChEBI" id="CHEBI:57540"/>
        <dbReference type="ChEBI" id="CHEBI:139151"/>
        <dbReference type="EC" id="2.4.2.59"/>
    </reaction>
</comment>
<comment type="cofactor">
    <cofactor evidence="1">
        <name>Fe(2+)</name>
        <dbReference type="ChEBI" id="CHEBI:29033"/>
    </cofactor>
</comment>
<comment type="pathway">
    <text evidence="1">Cofactor biosynthesis; thiamine diphosphate biosynthesis.</text>
</comment>
<comment type="subunit">
    <text evidence="1">Homooctamer; tetramer of dimers.</text>
</comment>
<comment type="similarity">
    <text evidence="1">Belongs to the THI4 family.</text>
</comment>
<protein>
    <recommendedName>
        <fullName evidence="1">Thiamine thiazole synthase</fullName>
        <ecNumber evidence="1">2.4.2.59</ecNumber>
    </recommendedName>
</protein>
<name>THI4_METVS</name>
<evidence type="ECO:0000255" key="1">
    <source>
        <dbReference type="HAMAP-Rule" id="MF_00304"/>
    </source>
</evidence>
<keyword id="KW-0408">Iron</keyword>
<keyword id="KW-0479">Metal-binding</keyword>
<keyword id="KW-0520">NAD</keyword>
<keyword id="KW-0784">Thiamine biosynthesis</keyword>
<keyword id="KW-0808">Transferase</keyword>
<reference key="1">
    <citation type="submission" date="2007-06" db="EMBL/GenBank/DDBJ databases">
        <title>Complete sequence of Methanococcus vannielii SB.</title>
        <authorList>
            <consortium name="US DOE Joint Genome Institute"/>
            <person name="Copeland A."/>
            <person name="Lucas S."/>
            <person name="Lapidus A."/>
            <person name="Barry K."/>
            <person name="Glavina del Rio T."/>
            <person name="Dalin E."/>
            <person name="Tice H."/>
            <person name="Pitluck S."/>
            <person name="Chain P."/>
            <person name="Malfatti S."/>
            <person name="Shin M."/>
            <person name="Vergez L."/>
            <person name="Schmutz J."/>
            <person name="Larimer F."/>
            <person name="Land M."/>
            <person name="Hauser L."/>
            <person name="Kyrpides N."/>
            <person name="Anderson I."/>
            <person name="Sieprawska-Lupa M."/>
            <person name="Whitman W.B."/>
            <person name="Richardson P."/>
        </authorList>
    </citation>
    <scope>NUCLEOTIDE SEQUENCE [LARGE SCALE GENOMIC DNA]</scope>
    <source>
        <strain>ATCC 35089 / DSM 1224 / JCM 13029 / OCM 148 / SB</strain>
    </source>
</reference>
<dbReference type="EC" id="2.4.2.59" evidence="1"/>
<dbReference type="EMBL" id="CP000742">
    <property type="protein sequence ID" value="ABR54569.1"/>
    <property type="molecule type" value="Genomic_DNA"/>
</dbReference>
<dbReference type="RefSeq" id="WP_011972472.1">
    <property type="nucleotide sequence ID" value="NC_009634.1"/>
</dbReference>
<dbReference type="SMR" id="A6UPZ7"/>
<dbReference type="STRING" id="406327.Mevan_0663"/>
<dbReference type="GeneID" id="5324694"/>
<dbReference type="KEGG" id="mvn:Mevan_0663"/>
<dbReference type="eggNOG" id="arCOG00574">
    <property type="taxonomic scope" value="Archaea"/>
</dbReference>
<dbReference type="HOGENOM" id="CLU_053727_2_0_2"/>
<dbReference type="OrthoDB" id="4240at2157"/>
<dbReference type="UniPathway" id="UPA00060"/>
<dbReference type="Proteomes" id="UP000001107">
    <property type="component" value="Chromosome"/>
</dbReference>
<dbReference type="GO" id="GO:0005506">
    <property type="term" value="F:iron ion binding"/>
    <property type="evidence" value="ECO:0007669"/>
    <property type="project" value="UniProtKB-UniRule"/>
</dbReference>
<dbReference type="GO" id="GO:0016763">
    <property type="term" value="F:pentosyltransferase activity"/>
    <property type="evidence" value="ECO:0007669"/>
    <property type="project" value="UniProtKB-UniRule"/>
</dbReference>
<dbReference type="GO" id="GO:0009228">
    <property type="term" value="P:thiamine biosynthetic process"/>
    <property type="evidence" value="ECO:0007669"/>
    <property type="project" value="UniProtKB-KW"/>
</dbReference>
<dbReference type="GO" id="GO:0009229">
    <property type="term" value="P:thiamine diphosphate biosynthetic process"/>
    <property type="evidence" value="ECO:0007669"/>
    <property type="project" value="UniProtKB-UniRule"/>
</dbReference>
<dbReference type="GO" id="GO:0052837">
    <property type="term" value="P:thiazole biosynthetic process"/>
    <property type="evidence" value="ECO:0007669"/>
    <property type="project" value="UniProtKB-UniRule"/>
</dbReference>
<dbReference type="Gene3D" id="3.50.50.60">
    <property type="entry name" value="FAD/NAD(P)-binding domain"/>
    <property type="match status" value="1"/>
</dbReference>
<dbReference type="HAMAP" id="MF_00304">
    <property type="entry name" value="Thi4"/>
    <property type="match status" value="1"/>
</dbReference>
<dbReference type="InterPro" id="IPR036188">
    <property type="entry name" value="FAD/NAD-bd_sf"/>
</dbReference>
<dbReference type="InterPro" id="IPR002922">
    <property type="entry name" value="Thi4_fam"/>
</dbReference>
<dbReference type="InterPro" id="IPR022828">
    <property type="entry name" value="Thi4_prok"/>
</dbReference>
<dbReference type="NCBIfam" id="TIGR00292">
    <property type="entry name" value="sulfide-dependent adenosine diphosphate thiazole synthase"/>
    <property type="match status" value="1"/>
</dbReference>
<dbReference type="PANTHER" id="PTHR43422">
    <property type="entry name" value="THIAMINE THIAZOLE SYNTHASE"/>
    <property type="match status" value="1"/>
</dbReference>
<dbReference type="PANTHER" id="PTHR43422:SF3">
    <property type="entry name" value="THIAMINE THIAZOLE SYNTHASE"/>
    <property type="match status" value="1"/>
</dbReference>
<dbReference type="Pfam" id="PF01946">
    <property type="entry name" value="Thi4"/>
    <property type="match status" value="1"/>
</dbReference>
<dbReference type="PRINTS" id="PR00420">
    <property type="entry name" value="RNGMNOXGNASE"/>
</dbReference>
<dbReference type="SUPFAM" id="SSF51905">
    <property type="entry name" value="FAD/NAD(P)-binding domain"/>
    <property type="match status" value="1"/>
</dbReference>